<sequence length="120" mass="12702">MQTPPELKYAPSHEWLAPDGTVGISDFAQDQLGDVVYVELPEVGRVVTAGETVAVVESVKTASDIYAPASGTIVAVNEQLSGSPELVNQSPYTDGWLFRLDVTEESGELMDAEAYAAANG</sequence>
<feature type="chain" id="PRO_1000204744" description="Glycine cleavage system H protein">
    <location>
        <begin position="1"/>
        <end position="120"/>
    </location>
</feature>
<feature type="domain" description="Lipoyl-binding" evidence="2">
    <location>
        <begin position="19"/>
        <end position="101"/>
    </location>
</feature>
<feature type="modified residue" description="N6-lipoyllysine" evidence="1">
    <location>
        <position position="60"/>
    </location>
</feature>
<gene>
    <name evidence="1" type="primary">gcvH</name>
    <name type="ordered locus">Dgeo_1906</name>
</gene>
<keyword id="KW-0450">Lipoyl</keyword>
<comment type="function">
    <text evidence="1">The glycine cleavage system catalyzes the degradation of glycine. The H protein shuttles the methylamine group of glycine from the P protein to the T protein.</text>
</comment>
<comment type="cofactor">
    <cofactor evidence="1">
        <name>(R)-lipoate</name>
        <dbReference type="ChEBI" id="CHEBI:83088"/>
    </cofactor>
    <text evidence="1">Binds 1 lipoyl cofactor covalently.</text>
</comment>
<comment type="subunit">
    <text evidence="1">The glycine cleavage system is composed of four proteins: P, T, L and H.</text>
</comment>
<comment type="similarity">
    <text evidence="1">Belongs to the GcvH family.</text>
</comment>
<reference key="1">
    <citation type="submission" date="2006-04" db="EMBL/GenBank/DDBJ databases">
        <title>Complete sequence of chromosome of Deinococcus geothermalis DSM 11300.</title>
        <authorList>
            <person name="Copeland A."/>
            <person name="Lucas S."/>
            <person name="Lapidus A."/>
            <person name="Barry K."/>
            <person name="Detter J.C."/>
            <person name="Glavina del Rio T."/>
            <person name="Hammon N."/>
            <person name="Israni S."/>
            <person name="Dalin E."/>
            <person name="Tice H."/>
            <person name="Pitluck S."/>
            <person name="Brettin T."/>
            <person name="Bruce D."/>
            <person name="Han C."/>
            <person name="Tapia R."/>
            <person name="Saunders E."/>
            <person name="Gilna P."/>
            <person name="Schmutz J."/>
            <person name="Larimer F."/>
            <person name="Land M."/>
            <person name="Hauser L."/>
            <person name="Kyrpides N."/>
            <person name="Kim E."/>
            <person name="Daly M.J."/>
            <person name="Fredrickson J.K."/>
            <person name="Makarova K.S."/>
            <person name="Gaidamakova E.K."/>
            <person name="Zhai M."/>
            <person name="Richardson P."/>
        </authorList>
    </citation>
    <scope>NUCLEOTIDE SEQUENCE [LARGE SCALE GENOMIC DNA]</scope>
    <source>
        <strain>DSM 11300 / CIP 105573 / AG-3a</strain>
    </source>
</reference>
<organism>
    <name type="scientific">Deinococcus geothermalis (strain DSM 11300 / CIP 105573 / AG-3a)</name>
    <dbReference type="NCBI Taxonomy" id="319795"/>
    <lineage>
        <taxon>Bacteria</taxon>
        <taxon>Thermotogati</taxon>
        <taxon>Deinococcota</taxon>
        <taxon>Deinococci</taxon>
        <taxon>Deinococcales</taxon>
        <taxon>Deinococcaceae</taxon>
        <taxon>Deinococcus</taxon>
    </lineage>
</organism>
<name>GCSH_DEIGD</name>
<proteinExistence type="inferred from homology"/>
<accession>Q1IX33</accession>
<evidence type="ECO:0000255" key="1">
    <source>
        <dbReference type="HAMAP-Rule" id="MF_00272"/>
    </source>
</evidence>
<evidence type="ECO:0000255" key="2">
    <source>
        <dbReference type="PROSITE-ProRule" id="PRU01066"/>
    </source>
</evidence>
<protein>
    <recommendedName>
        <fullName evidence="1">Glycine cleavage system H protein</fullName>
    </recommendedName>
</protein>
<dbReference type="EMBL" id="CP000359">
    <property type="protein sequence ID" value="ABF46201.1"/>
    <property type="molecule type" value="Genomic_DNA"/>
</dbReference>
<dbReference type="RefSeq" id="WP_011531028.1">
    <property type="nucleotide sequence ID" value="NC_008025.1"/>
</dbReference>
<dbReference type="SMR" id="Q1IX33"/>
<dbReference type="STRING" id="319795.Dgeo_1906"/>
<dbReference type="KEGG" id="dge:Dgeo_1906"/>
<dbReference type="eggNOG" id="COG0509">
    <property type="taxonomic scope" value="Bacteria"/>
</dbReference>
<dbReference type="HOGENOM" id="CLU_097408_2_0_0"/>
<dbReference type="Proteomes" id="UP000002431">
    <property type="component" value="Chromosome"/>
</dbReference>
<dbReference type="GO" id="GO:0005829">
    <property type="term" value="C:cytosol"/>
    <property type="evidence" value="ECO:0007669"/>
    <property type="project" value="TreeGrafter"/>
</dbReference>
<dbReference type="GO" id="GO:0005960">
    <property type="term" value="C:glycine cleavage complex"/>
    <property type="evidence" value="ECO:0007669"/>
    <property type="project" value="InterPro"/>
</dbReference>
<dbReference type="GO" id="GO:0019464">
    <property type="term" value="P:glycine decarboxylation via glycine cleavage system"/>
    <property type="evidence" value="ECO:0007669"/>
    <property type="project" value="UniProtKB-UniRule"/>
</dbReference>
<dbReference type="CDD" id="cd06848">
    <property type="entry name" value="GCS_H"/>
    <property type="match status" value="1"/>
</dbReference>
<dbReference type="Gene3D" id="2.40.50.100">
    <property type="match status" value="1"/>
</dbReference>
<dbReference type="HAMAP" id="MF_00272">
    <property type="entry name" value="GcvH"/>
    <property type="match status" value="1"/>
</dbReference>
<dbReference type="InterPro" id="IPR003016">
    <property type="entry name" value="2-oxoA_DH_lipoyl-BS"/>
</dbReference>
<dbReference type="InterPro" id="IPR000089">
    <property type="entry name" value="Biotin_lipoyl"/>
</dbReference>
<dbReference type="InterPro" id="IPR002930">
    <property type="entry name" value="GCV_H"/>
</dbReference>
<dbReference type="InterPro" id="IPR033753">
    <property type="entry name" value="GCV_H/Fam206"/>
</dbReference>
<dbReference type="InterPro" id="IPR017453">
    <property type="entry name" value="GCV_H_sub"/>
</dbReference>
<dbReference type="InterPro" id="IPR011053">
    <property type="entry name" value="Single_hybrid_motif"/>
</dbReference>
<dbReference type="NCBIfam" id="TIGR00527">
    <property type="entry name" value="gcvH"/>
    <property type="match status" value="1"/>
</dbReference>
<dbReference type="NCBIfam" id="NF002270">
    <property type="entry name" value="PRK01202.1"/>
    <property type="match status" value="1"/>
</dbReference>
<dbReference type="PANTHER" id="PTHR11715">
    <property type="entry name" value="GLYCINE CLEAVAGE SYSTEM H PROTEIN"/>
    <property type="match status" value="1"/>
</dbReference>
<dbReference type="PANTHER" id="PTHR11715:SF3">
    <property type="entry name" value="GLYCINE CLEAVAGE SYSTEM H PROTEIN-RELATED"/>
    <property type="match status" value="1"/>
</dbReference>
<dbReference type="Pfam" id="PF01597">
    <property type="entry name" value="GCV_H"/>
    <property type="match status" value="1"/>
</dbReference>
<dbReference type="SUPFAM" id="SSF51230">
    <property type="entry name" value="Single hybrid motif"/>
    <property type="match status" value="1"/>
</dbReference>
<dbReference type="PROSITE" id="PS50968">
    <property type="entry name" value="BIOTINYL_LIPOYL"/>
    <property type="match status" value="1"/>
</dbReference>
<dbReference type="PROSITE" id="PS00189">
    <property type="entry name" value="LIPOYL"/>
    <property type="match status" value="1"/>
</dbReference>